<feature type="chain" id="PRO_0000226452" description="ATP-dependent Clp protease proteolytic subunit">
    <location>
        <begin position="1"/>
        <end position="203"/>
    </location>
</feature>
<feature type="active site" description="Nucleophile" evidence="1">
    <location>
        <position position="103"/>
    </location>
</feature>
<feature type="active site" evidence="1">
    <location>
        <position position="128"/>
    </location>
</feature>
<dbReference type="EC" id="3.4.21.92" evidence="1"/>
<dbReference type="EMBL" id="CP000127">
    <property type="protein sequence ID" value="ABA58148.1"/>
    <property type="molecule type" value="Genomic_DNA"/>
</dbReference>
<dbReference type="RefSeq" id="WP_002811362.1">
    <property type="nucleotide sequence ID" value="NC_007484.1"/>
</dbReference>
<dbReference type="SMR" id="Q3JAJ8"/>
<dbReference type="FunCoup" id="Q3JAJ8">
    <property type="interactions" value="500"/>
</dbReference>
<dbReference type="STRING" id="323261.Noc_1676"/>
<dbReference type="MEROPS" id="S14.001"/>
<dbReference type="KEGG" id="noc:Noc_1676"/>
<dbReference type="eggNOG" id="COG0740">
    <property type="taxonomic scope" value="Bacteria"/>
</dbReference>
<dbReference type="HOGENOM" id="CLU_058707_3_2_6"/>
<dbReference type="InParanoid" id="Q3JAJ8"/>
<dbReference type="Proteomes" id="UP000006838">
    <property type="component" value="Chromosome"/>
</dbReference>
<dbReference type="GO" id="GO:0005737">
    <property type="term" value="C:cytoplasm"/>
    <property type="evidence" value="ECO:0007669"/>
    <property type="project" value="UniProtKB-SubCell"/>
</dbReference>
<dbReference type="GO" id="GO:0009368">
    <property type="term" value="C:endopeptidase Clp complex"/>
    <property type="evidence" value="ECO:0007669"/>
    <property type="project" value="TreeGrafter"/>
</dbReference>
<dbReference type="GO" id="GO:0004176">
    <property type="term" value="F:ATP-dependent peptidase activity"/>
    <property type="evidence" value="ECO:0007669"/>
    <property type="project" value="InterPro"/>
</dbReference>
<dbReference type="GO" id="GO:0051117">
    <property type="term" value="F:ATPase binding"/>
    <property type="evidence" value="ECO:0007669"/>
    <property type="project" value="TreeGrafter"/>
</dbReference>
<dbReference type="GO" id="GO:0004252">
    <property type="term" value="F:serine-type endopeptidase activity"/>
    <property type="evidence" value="ECO:0007669"/>
    <property type="project" value="UniProtKB-UniRule"/>
</dbReference>
<dbReference type="GO" id="GO:0006515">
    <property type="term" value="P:protein quality control for misfolded or incompletely synthesized proteins"/>
    <property type="evidence" value="ECO:0007669"/>
    <property type="project" value="TreeGrafter"/>
</dbReference>
<dbReference type="CDD" id="cd07017">
    <property type="entry name" value="S14_ClpP_2"/>
    <property type="match status" value="1"/>
</dbReference>
<dbReference type="FunFam" id="3.90.226.10:FF:000001">
    <property type="entry name" value="ATP-dependent Clp protease proteolytic subunit"/>
    <property type="match status" value="1"/>
</dbReference>
<dbReference type="Gene3D" id="3.90.226.10">
    <property type="entry name" value="2-enoyl-CoA Hydratase, Chain A, domain 1"/>
    <property type="match status" value="1"/>
</dbReference>
<dbReference type="HAMAP" id="MF_00444">
    <property type="entry name" value="ClpP"/>
    <property type="match status" value="1"/>
</dbReference>
<dbReference type="InterPro" id="IPR001907">
    <property type="entry name" value="ClpP"/>
</dbReference>
<dbReference type="InterPro" id="IPR029045">
    <property type="entry name" value="ClpP/crotonase-like_dom_sf"/>
</dbReference>
<dbReference type="InterPro" id="IPR023562">
    <property type="entry name" value="ClpP/TepA"/>
</dbReference>
<dbReference type="InterPro" id="IPR033135">
    <property type="entry name" value="ClpP_His_AS"/>
</dbReference>
<dbReference type="InterPro" id="IPR018215">
    <property type="entry name" value="ClpP_Ser_AS"/>
</dbReference>
<dbReference type="NCBIfam" id="TIGR00493">
    <property type="entry name" value="clpP"/>
    <property type="match status" value="1"/>
</dbReference>
<dbReference type="NCBIfam" id="NF001368">
    <property type="entry name" value="PRK00277.1"/>
    <property type="match status" value="1"/>
</dbReference>
<dbReference type="NCBIfam" id="NF009205">
    <property type="entry name" value="PRK12553.1"/>
    <property type="match status" value="1"/>
</dbReference>
<dbReference type="PANTHER" id="PTHR10381">
    <property type="entry name" value="ATP-DEPENDENT CLP PROTEASE PROTEOLYTIC SUBUNIT"/>
    <property type="match status" value="1"/>
</dbReference>
<dbReference type="PANTHER" id="PTHR10381:SF70">
    <property type="entry name" value="ATP-DEPENDENT CLP PROTEASE PROTEOLYTIC SUBUNIT"/>
    <property type="match status" value="1"/>
</dbReference>
<dbReference type="Pfam" id="PF00574">
    <property type="entry name" value="CLP_protease"/>
    <property type="match status" value="1"/>
</dbReference>
<dbReference type="PRINTS" id="PR00127">
    <property type="entry name" value="CLPPROTEASEP"/>
</dbReference>
<dbReference type="SUPFAM" id="SSF52096">
    <property type="entry name" value="ClpP/crotonase"/>
    <property type="match status" value="1"/>
</dbReference>
<dbReference type="PROSITE" id="PS00382">
    <property type="entry name" value="CLP_PROTEASE_HIS"/>
    <property type="match status" value="1"/>
</dbReference>
<dbReference type="PROSITE" id="PS00381">
    <property type="entry name" value="CLP_PROTEASE_SER"/>
    <property type="match status" value="1"/>
</dbReference>
<evidence type="ECO:0000255" key="1">
    <source>
        <dbReference type="HAMAP-Rule" id="MF_00444"/>
    </source>
</evidence>
<gene>
    <name evidence="1" type="primary">clpP</name>
    <name type="ordered locus">Noc_1676</name>
</gene>
<organism>
    <name type="scientific">Nitrosococcus oceani (strain ATCC 19707 / BCRC 17464 / JCM 30415 / NCIMB 11848 / C-107)</name>
    <dbReference type="NCBI Taxonomy" id="323261"/>
    <lineage>
        <taxon>Bacteria</taxon>
        <taxon>Pseudomonadati</taxon>
        <taxon>Pseudomonadota</taxon>
        <taxon>Gammaproteobacteria</taxon>
        <taxon>Chromatiales</taxon>
        <taxon>Chromatiaceae</taxon>
        <taxon>Nitrosococcus</taxon>
    </lineage>
</organism>
<comment type="function">
    <text evidence="1">Cleaves peptides in various proteins in a process that requires ATP hydrolysis. Has a chymotrypsin-like activity. Plays a major role in the degradation of misfolded proteins.</text>
</comment>
<comment type="catalytic activity">
    <reaction evidence="1">
        <text>Hydrolysis of proteins to small peptides in the presence of ATP and magnesium. alpha-casein is the usual test substrate. In the absence of ATP, only oligopeptides shorter than five residues are hydrolyzed (such as succinyl-Leu-Tyr-|-NHMec, and Leu-Tyr-Leu-|-Tyr-Trp, in which cleavage of the -Tyr-|-Leu- and -Tyr-|-Trp bonds also occurs).</text>
        <dbReference type="EC" id="3.4.21.92"/>
    </reaction>
</comment>
<comment type="subunit">
    <text evidence="1">Fourteen ClpP subunits assemble into 2 heptameric rings which stack back to back to give a disk-like structure with a central cavity, resembling the structure of eukaryotic proteasomes.</text>
</comment>
<comment type="subcellular location">
    <subcellularLocation>
        <location evidence="1">Cytoplasm</location>
    </subcellularLocation>
</comment>
<comment type="similarity">
    <text evidence="1">Belongs to the peptidase S14 family.</text>
</comment>
<sequence length="203" mass="22326">MIDSLNTLVPMVVEQTARGERAYDIYSRLLKERVVFLVGPVEDHMANLVVAQLLFLESENPDKDIHLYINSPGGSVTAGLSIYDTMQFIKPDVSTLCVGQAASMGAVLLAGGAGGKRHCLPHSRLLIHQPLGGFQGQATDIDIHAREILLVRERLNHILAKHTGQPIEKIQHDTDRDYFMSATESLAYGLVDSVLKQRAEISL</sequence>
<keyword id="KW-0963">Cytoplasm</keyword>
<keyword id="KW-0378">Hydrolase</keyword>
<keyword id="KW-0645">Protease</keyword>
<keyword id="KW-1185">Reference proteome</keyword>
<keyword id="KW-0720">Serine protease</keyword>
<name>CLPP_NITOC</name>
<proteinExistence type="inferred from homology"/>
<reference key="1">
    <citation type="journal article" date="2006" name="Appl. Environ. Microbiol.">
        <title>Complete genome sequence of the marine, chemolithoautotrophic, ammonia-oxidizing bacterium Nitrosococcus oceani ATCC 19707.</title>
        <authorList>
            <person name="Klotz M.G."/>
            <person name="Arp D.J."/>
            <person name="Chain P.S.G."/>
            <person name="El-Sheikh A.F."/>
            <person name="Hauser L.J."/>
            <person name="Hommes N.G."/>
            <person name="Larimer F.W."/>
            <person name="Malfatti S.A."/>
            <person name="Norton J.M."/>
            <person name="Poret-Peterson A.T."/>
            <person name="Vergez L.M."/>
            <person name="Ward B.B."/>
        </authorList>
    </citation>
    <scope>NUCLEOTIDE SEQUENCE [LARGE SCALE GENOMIC DNA]</scope>
    <source>
        <strain>ATCC 19707 / BCRC 17464 / JCM 30415 / NCIMB 11848 / C-107</strain>
    </source>
</reference>
<accession>Q3JAJ8</accession>
<protein>
    <recommendedName>
        <fullName evidence="1">ATP-dependent Clp protease proteolytic subunit</fullName>
        <ecNumber evidence="1">3.4.21.92</ecNumber>
    </recommendedName>
    <alternativeName>
        <fullName evidence="1">Endopeptidase Clp</fullName>
    </alternativeName>
</protein>